<keyword id="KW-0028">Amino-acid biosynthesis</keyword>
<keyword id="KW-0963">Cytoplasm</keyword>
<keyword id="KW-0368">Histidine biosynthesis</keyword>
<keyword id="KW-0456">Lyase</keyword>
<keyword id="KW-1185">Reference proteome</keyword>
<comment type="catalytic activity">
    <reaction evidence="1">
        <text>D-erythro-1-(imidazol-4-yl)glycerol 3-phosphate = 3-(imidazol-4-yl)-2-oxopropyl phosphate + H2O</text>
        <dbReference type="Rhea" id="RHEA:11040"/>
        <dbReference type="ChEBI" id="CHEBI:15377"/>
        <dbReference type="ChEBI" id="CHEBI:57766"/>
        <dbReference type="ChEBI" id="CHEBI:58278"/>
        <dbReference type="EC" id="4.2.1.19"/>
    </reaction>
</comment>
<comment type="pathway">
    <text evidence="1">Amino-acid biosynthesis; L-histidine biosynthesis; L-histidine from 5-phospho-alpha-D-ribose 1-diphosphate: step 6/9.</text>
</comment>
<comment type="subcellular location">
    <subcellularLocation>
        <location evidence="1">Cytoplasm</location>
    </subcellularLocation>
</comment>
<comment type="similarity">
    <text evidence="1">Belongs to the imidazoleglycerol-phosphate dehydratase family.</text>
</comment>
<name>HIS7_STRGC</name>
<gene>
    <name evidence="1" type="primary">hisB</name>
    <name type="ordered locus">SGO_1407</name>
</gene>
<evidence type="ECO:0000255" key="1">
    <source>
        <dbReference type="HAMAP-Rule" id="MF_00076"/>
    </source>
</evidence>
<accession>A8AY27</accession>
<organism>
    <name type="scientific">Streptococcus gordonii (strain Challis / ATCC 35105 / BCRC 15272 / CH1 / DL1 / V288)</name>
    <dbReference type="NCBI Taxonomy" id="467705"/>
    <lineage>
        <taxon>Bacteria</taxon>
        <taxon>Bacillati</taxon>
        <taxon>Bacillota</taxon>
        <taxon>Bacilli</taxon>
        <taxon>Lactobacillales</taxon>
        <taxon>Streptococcaceae</taxon>
        <taxon>Streptococcus</taxon>
    </lineage>
</organism>
<dbReference type="EC" id="4.2.1.19" evidence="1"/>
<dbReference type="EMBL" id="CP000725">
    <property type="protein sequence ID" value="ABV09997.1"/>
    <property type="molecule type" value="Genomic_DNA"/>
</dbReference>
<dbReference type="RefSeq" id="WP_012130492.1">
    <property type="nucleotide sequence ID" value="NC_009785.1"/>
</dbReference>
<dbReference type="SMR" id="A8AY27"/>
<dbReference type="STRING" id="467705.SGO_1407"/>
<dbReference type="KEGG" id="sgo:SGO_1407"/>
<dbReference type="eggNOG" id="COG0131">
    <property type="taxonomic scope" value="Bacteria"/>
</dbReference>
<dbReference type="HOGENOM" id="CLU_044308_2_0_9"/>
<dbReference type="UniPathway" id="UPA00031">
    <property type="reaction ID" value="UER00011"/>
</dbReference>
<dbReference type="Proteomes" id="UP000001131">
    <property type="component" value="Chromosome"/>
</dbReference>
<dbReference type="GO" id="GO:0005737">
    <property type="term" value="C:cytoplasm"/>
    <property type="evidence" value="ECO:0007669"/>
    <property type="project" value="UniProtKB-SubCell"/>
</dbReference>
<dbReference type="GO" id="GO:0004424">
    <property type="term" value="F:imidazoleglycerol-phosphate dehydratase activity"/>
    <property type="evidence" value="ECO:0007669"/>
    <property type="project" value="UniProtKB-UniRule"/>
</dbReference>
<dbReference type="GO" id="GO:0000105">
    <property type="term" value="P:L-histidine biosynthetic process"/>
    <property type="evidence" value="ECO:0007669"/>
    <property type="project" value="UniProtKB-UniRule"/>
</dbReference>
<dbReference type="CDD" id="cd07914">
    <property type="entry name" value="IGPD"/>
    <property type="match status" value="1"/>
</dbReference>
<dbReference type="FunFam" id="3.30.230.40:FF:000001">
    <property type="entry name" value="Imidazoleglycerol-phosphate dehydratase HisB"/>
    <property type="match status" value="1"/>
</dbReference>
<dbReference type="FunFam" id="3.30.230.40:FF:000003">
    <property type="entry name" value="Imidazoleglycerol-phosphate dehydratase HisB"/>
    <property type="match status" value="1"/>
</dbReference>
<dbReference type="Gene3D" id="3.30.230.40">
    <property type="entry name" value="Imidazole glycerol phosphate dehydratase, domain 1"/>
    <property type="match status" value="2"/>
</dbReference>
<dbReference type="HAMAP" id="MF_00076">
    <property type="entry name" value="HisB"/>
    <property type="match status" value="1"/>
</dbReference>
<dbReference type="InterPro" id="IPR038494">
    <property type="entry name" value="IGPD_sf"/>
</dbReference>
<dbReference type="InterPro" id="IPR000807">
    <property type="entry name" value="ImidazoleglycerolP_deHydtase"/>
</dbReference>
<dbReference type="InterPro" id="IPR020565">
    <property type="entry name" value="ImidazoleglycerP_deHydtase_CS"/>
</dbReference>
<dbReference type="InterPro" id="IPR020568">
    <property type="entry name" value="Ribosomal_Su5_D2-typ_SF"/>
</dbReference>
<dbReference type="NCBIfam" id="NF002107">
    <property type="entry name" value="PRK00951.1-2"/>
    <property type="match status" value="1"/>
</dbReference>
<dbReference type="NCBIfam" id="NF002111">
    <property type="entry name" value="PRK00951.2-1"/>
    <property type="match status" value="1"/>
</dbReference>
<dbReference type="NCBIfam" id="NF002114">
    <property type="entry name" value="PRK00951.2-4"/>
    <property type="match status" value="1"/>
</dbReference>
<dbReference type="PANTHER" id="PTHR23133:SF2">
    <property type="entry name" value="IMIDAZOLEGLYCEROL-PHOSPHATE DEHYDRATASE"/>
    <property type="match status" value="1"/>
</dbReference>
<dbReference type="PANTHER" id="PTHR23133">
    <property type="entry name" value="IMIDAZOLEGLYCEROL-PHOSPHATE DEHYDRATASE HIS7"/>
    <property type="match status" value="1"/>
</dbReference>
<dbReference type="Pfam" id="PF00475">
    <property type="entry name" value="IGPD"/>
    <property type="match status" value="1"/>
</dbReference>
<dbReference type="SUPFAM" id="SSF54211">
    <property type="entry name" value="Ribosomal protein S5 domain 2-like"/>
    <property type="match status" value="2"/>
</dbReference>
<dbReference type="PROSITE" id="PS00954">
    <property type="entry name" value="IGP_DEHYDRATASE_1"/>
    <property type="match status" value="1"/>
</dbReference>
<dbReference type="PROSITE" id="PS00955">
    <property type="entry name" value="IGP_DEHYDRATASE_2"/>
    <property type="match status" value="1"/>
</dbReference>
<protein>
    <recommendedName>
        <fullName evidence="1">Imidazoleglycerol-phosphate dehydratase</fullName>
        <shortName evidence="1">IGPD</shortName>
        <ecNumber evidence="1">4.2.1.19</ecNumber>
    </recommendedName>
</protein>
<reference key="1">
    <citation type="journal article" date="2007" name="J. Bacteriol.">
        <title>Genome-wide transcriptional changes in Streptococcus gordonii in response to competence signaling peptide.</title>
        <authorList>
            <person name="Vickerman M.M."/>
            <person name="Iobst S."/>
            <person name="Jesionowski A.M."/>
            <person name="Gill S.R."/>
        </authorList>
    </citation>
    <scope>NUCLEOTIDE SEQUENCE [LARGE SCALE GENOMIC DNA]</scope>
    <source>
        <strain>Challis / ATCC 35105 / BCRC 15272 / CH1 / DL1 / V288</strain>
    </source>
</reference>
<sequence>MRQAEIKRKTQETDIELAVNLDQQEPVAIETGVGFFDHMLTLFARHSRISLTVKAEGDLWVDSHHTVEDVGIVLGLALRQALGDKAGINRYGTSFVPMDETLGMASLDLSGRSYLVFEADFDNPKLGNFDTELVEEFFQALAFNLQMNLHLKILHGKNSHHKAESLFKATGRALREAITINPEIHGVNSTKGLL</sequence>
<proteinExistence type="inferred from homology"/>
<feature type="chain" id="PRO_1000075259" description="Imidazoleglycerol-phosphate dehydratase">
    <location>
        <begin position="1"/>
        <end position="194"/>
    </location>
</feature>